<dbReference type="EMBL" id="CP001124">
    <property type="protein sequence ID" value="ACH37953.1"/>
    <property type="molecule type" value="Genomic_DNA"/>
</dbReference>
<dbReference type="RefSeq" id="WP_012529365.1">
    <property type="nucleotide sequence ID" value="NC_011146.1"/>
</dbReference>
<dbReference type="SMR" id="B5EFP9"/>
<dbReference type="STRING" id="404380.Gbem_0932"/>
<dbReference type="KEGG" id="gbm:Gbem_0932"/>
<dbReference type="eggNOG" id="COG0051">
    <property type="taxonomic scope" value="Bacteria"/>
</dbReference>
<dbReference type="HOGENOM" id="CLU_122625_1_3_7"/>
<dbReference type="OrthoDB" id="9804464at2"/>
<dbReference type="Proteomes" id="UP000008825">
    <property type="component" value="Chromosome"/>
</dbReference>
<dbReference type="GO" id="GO:1990904">
    <property type="term" value="C:ribonucleoprotein complex"/>
    <property type="evidence" value="ECO:0007669"/>
    <property type="project" value="UniProtKB-KW"/>
</dbReference>
<dbReference type="GO" id="GO:0005840">
    <property type="term" value="C:ribosome"/>
    <property type="evidence" value="ECO:0007669"/>
    <property type="project" value="UniProtKB-KW"/>
</dbReference>
<dbReference type="GO" id="GO:0003735">
    <property type="term" value="F:structural constituent of ribosome"/>
    <property type="evidence" value="ECO:0007669"/>
    <property type="project" value="InterPro"/>
</dbReference>
<dbReference type="GO" id="GO:0000049">
    <property type="term" value="F:tRNA binding"/>
    <property type="evidence" value="ECO:0007669"/>
    <property type="project" value="UniProtKB-UniRule"/>
</dbReference>
<dbReference type="GO" id="GO:0006412">
    <property type="term" value="P:translation"/>
    <property type="evidence" value="ECO:0007669"/>
    <property type="project" value="UniProtKB-UniRule"/>
</dbReference>
<dbReference type="FunFam" id="3.30.70.600:FF:000001">
    <property type="entry name" value="30S ribosomal protein S10"/>
    <property type="match status" value="1"/>
</dbReference>
<dbReference type="Gene3D" id="3.30.70.600">
    <property type="entry name" value="Ribosomal protein S10 domain"/>
    <property type="match status" value="1"/>
</dbReference>
<dbReference type="HAMAP" id="MF_00508">
    <property type="entry name" value="Ribosomal_uS10"/>
    <property type="match status" value="1"/>
</dbReference>
<dbReference type="InterPro" id="IPR001848">
    <property type="entry name" value="Ribosomal_uS10"/>
</dbReference>
<dbReference type="InterPro" id="IPR018268">
    <property type="entry name" value="Ribosomal_uS10_CS"/>
</dbReference>
<dbReference type="InterPro" id="IPR027486">
    <property type="entry name" value="Ribosomal_uS10_dom"/>
</dbReference>
<dbReference type="InterPro" id="IPR036838">
    <property type="entry name" value="Ribosomal_uS10_dom_sf"/>
</dbReference>
<dbReference type="NCBIfam" id="NF001861">
    <property type="entry name" value="PRK00596.1"/>
    <property type="match status" value="1"/>
</dbReference>
<dbReference type="NCBIfam" id="TIGR01049">
    <property type="entry name" value="rpsJ_bact"/>
    <property type="match status" value="1"/>
</dbReference>
<dbReference type="PANTHER" id="PTHR11700">
    <property type="entry name" value="30S RIBOSOMAL PROTEIN S10 FAMILY MEMBER"/>
    <property type="match status" value="1"/>
</dbReference>
<dbReference type="Pfam" id="PF00338">
    <property type="entry name" value="Ribosomal_S10"/>
    <property type="match status" value="1"/>
</dbReference>
<dbReference type="PRINTS" id="PR00971">
    <property type="entry name" value="RIBOSOMALS10"/>
</dbReference>
<dbReference type="SMART" id="SM01403">
    <property type="entry name" value="Ribosomal_S10"/>
    <property type="match status" value="1"/>
</dbReference>
<dbReference type="SUPFAM" id="SSF54999">
    <property type="entry name" value="Ribosomal protein S10"/>
    <property type="match status" value="1"/>
</dbReference>
<dbReference type="PROSITE" id="PS00361">
    <property type="entry name" value="RIBOSOMAL_S10"/>
    <property type="match status" value="1"/>
</dbReference>
<sequence length="102" mass="11499">MPSQKIRIRLKAYDHKLLDTSVGEIVDTAKRTGARVAGPIPLPTVINKYCVLRGPHVDKKSREQFEIRTHKRLIDILEPTQQTVDALMKLDLSAGVDVEIKL</sequence>
<name>RS10_CITBB</name>
<keyword id="KW-1185">Reference proteome</keyword>
<keyword id="KW-0687">Ribonucleoprotein</keyword>
<keyword id="KW-0689">Ribosomal protein</keyword>
<protein>
    <recommendedName>
        <fullName evidence="1">Small ribosomal subunit protein uS10</fullName>
    </recommendedName>
    <alternativeName>
        <fullName evidence="2">30S ribosomal protein S10</fullName>
    </alternativeName>
</protein>
<proteinExistence type="inferred from homology"/>
<gene>
    <name evidence="1" type="primary">rpsJ</name>
    <name type="ordered locus">Gbem_0932</name>
</gene>
<evidence type="ECO:0000255" key="1">
    <source>
        <dbReference type="HAMAP-Rule" id="MF_00508"/>
    </source>
</evidence>
<evidence type="ECO:0000305" key="2"/>
<feature type="chain" id="PRO_1000127130" description="Small ribosomal subunit protein uS10">
    <location>
        <begin position="1"/>
        <end position="102"/>
    </location>
</feature>
<accession>B5EFP9</accession>
<reference key="1">
    <citation type="submission" date="2008-07" db="EMBL/GenBank/DDBJ databases">
        <title>Complete sequence of Geobacter bemidjiensis BEM.</title>
        <authorList>
            <consortium name="US DOE Joint Genome Institute"/>
            <person name="Lucas S."/>
            <person name="Copeland A."/>
            <person name="Lapidus A."/>
            <person name="Glavina del Rio T."/>
            <person name="Dalin E."/>
            <person name="Tice H."/>
            <person name="Bruce D."/>
            <person name="Goodwin L."/>
            <person name="Pitluck S."/>
            <person name="Kiss H."/>
            <person name="Brettin T."/>
            <person name="Detter J.C."/>
            <person name="Han C."/>
            <person name="Kuske C.R."/>
            <person name="Schmutz J."/>
            <person name="Larimer F."/>
            <person name="Land M."/>
            <person name="Hauser L."/>
            <person name="Kyrpides N."/>
            <person name="Lykidis A."/>
            <person name="Lovley D."/>
            <person name="Richardson P."/>
        </authorList>
    </citation>
    <scope>NUCLEOTIDE SEQUENCE [LARGE SCALE GENOMIC DNA]</scope>
    <source>
        <strain>ATCC BAA-1014 / DSM 16622 / JCM 12645 / Bem</strain>
    </source>
</reference>
<organism>
    <name type="scientific">Citrifermentans bemidjiense (strain ATCC BAA-1014 / DSM 16622 / JCM 12645 / Bem)</name>
    <name type="common">Geobacter bemidjiensis</name>
    <dbReference type="NCBI Taxonomy" id="404380"/>
    <lineage>
        <taxon>Bacteria</taxon>
        <taxon>Pseudomonadati</taxon>
        <taxon>Thermodesulfobacteriota</taxon>
        <taxon>Desulfuromonadia</taxon>
        <taxon>Geobacterales</taxon>
        <taxon>Geobacteraceae</taxon>
        <taxon>Citrifermentans</taxon>
    </lineage>
</organism>
<comment type="function">
    <text evidence="1">Involved in the binding of tRNA to the ribosomes.</text>
</comment>
<comment type="subunit">
    <text evidence="1">Part of the 30S ribosomal subunit.</text>
</comment>
<comment type="similarity">
    <text evidence="1">Belongs to the universal ribosomal protein uS10 family.</text>
</comment>